<proteinExistence type="evidence at protein level"/>
<name>CORE5_ADE05</name>
<keyword id="KW-0238">DNA-binding</keyword>
<keyword id="KW-1048">Host nucleus</keyword>
<keyword id="KW-0426">Late protein</keyword>
<keyword id="KW-1185">Reference proteome</keyword>
<keyword id="KW-0832">Ubl conjugation</keyword>
<keyword id="KW-0118">Viral capsid assembly</keyword>
<keyword id="KW-1188">Viral release from host cell</keyword>
<keyword id="KW-0946">Virion</keyword>
<evidence type="ECO:0000255" key="1">
    <source>
        <dbReference type="HAMAP-Rule" id="MF_04053"/>
    </source>
</evidence>
<evidence type="ECO:0000256" key="2">
    <source>
        <dbReference type="SAM" id="MobiDB-lite"/>
    </source>
</evidence>
<evidence type="ECO:0000269" key="3">
    <source>
    </source>
</evidence>
<evidence type="ECO:0000269" key="4">
    <source>
    </source>
</evidence>
<evidence type="ECO:0000269" key="5">
    <source>
    </source>
</evidence>
<evidence type="ECO:0000269" key="6">
    <source>
    </source>
</evidence>
<evidence type="ECO:0000269" key="7">
    <source>
    </source>
</evidence>
<evidence type="ECO:0000305" key="8"/>
<organism>
    <name type="scientific">Human adenovirus C serotype 5</name>
    <name type="common">HAdV-5</name>
    <name type="synonym">Human adenovirus 5</name>
    <dbReference type="NCBI Taxonomy" id="28285"/>
    <lineage>
        <taxon>Viruses</taxon>
        <taxon>Varidnaviria</taxon>
        <taxon>Bamfordvirae</taxon>
        <taxon>Preplasmiviricota</taxon>
        <taxon>Tectiliviricetes</taxon>
        <taxon>Rowavirales</taxon>
        <taxon>Adenoviridae</taxon>
        <taxon>Mastadenovirus</taxon>
        <taxon>Human mastadenovirus C</taxon>
    </lineage>
</organism>
<accession>P24938</accession>
<protein>
    <recommendedName>
        <fullName evidence="1">Core-capsid bridging protein</fullName>
    </recommendedName>
    <alternativeName>
        <fullName evidence="1">Core protein V</fullName>
    </alternativeName>
</protein>
<feature type="chain" id="PRO_0000221904" description="Core-capsid bridging protein">
    <location>
        <begin position="1"/>
        <end position="368"/>
    </location>
</feature>
<feature type="region of interest" description="Disordered" evidence="2">
    <location>
        <begin position="17"/>
        <end position="49"/>
    </location>
</feature>
<feature type="region of interest" description="Disordered" evidence="2">
    <location>
        <begin position="307"/>
        <end position="340"/>
    </location>
</feature>
<feature type="compositionally biased region" description="Basic and acidic residues" evidence="2">
    <location>
        <begin position="22"/>
        <end position="31"/>
    </location>
</feature>
<feature type="compositionally biased region" description="Basic residues" evidence="2">
    <location>
        <begin position="32"/>
        <end position="41"/>
    </location>
</feature>
<feature type="compositionally biased region" description="Basic residues" evidence="2">
    <location>
        <begin position="314"/>
        <end position="337"/>
    </location>
</feature>
<organismHost>
    <name type="scientific">Homo sapiens</name>
    <name type="common">Human</name>
    <dbReference type="NCBI Taxonomy" id="9606"/>
</organismHost>
<dbReference type="EMBL" id="M73260">
    <property type="protein sequence ID" value="AAA96409.1"/>
    <property type="molecule type" value="Genomic_DNA"/>
</dbReference>
<dbReference type="PIR" id="C39449">
    <property type="entry name" value="FOADM5"/>
</dbReference>
<dbReference type="RefSeq" id="AP_000208.1">
    <property type="nucleotide sequence ID" value="AC_000008.1"/>
</dbReference>
<dbReference type="IntAct" id="P24938">
    <property type="interactions" value="2"/>
</dbReference>
<dbReference type="MINT" id="P24938"/>
<dbReference type="Proteomes" id="UP000004992">
    <property type="component" value="Genome"/>
</dbReference>
<dbReference type="GO" id="GO:0044196">
    <property type="term" value="C:host cell nucleolus"/>
    <property type="evidence" value="ECO:0007669"/>
    <property type="project" value="UniProtKB-SubCell"/>
</dbReference>
<dbReference type="GO" id="GO:0019028">
    <property type="term" value="C:viral capsid"/>
    <property type="evidence" value="ECO:0000314"/>
    <property type="project" value="CACAO"/>
</dbReference>
<dbReference type="GO" id="GO:0003677">
    <property type="term" value="F:DNA binding"/>
    <property type="evidence" value="ECO:0000314"/>
    <property type="project" value="UniProtKB"/>
</dbReference>
<dbReference type="GO" id="GO:0019076">
    <property type="term" value="P:viral release from host cell"/>
    <property type="evidence" value="ECO:0007669"/>
    <property type="project" value="UniProtKB-UniRule"/>
</dbReference>
<dbReference type="HAMAP" id="MF_04053">
    <property type="entry name" value="ADV_CORE5"/>
    <property type="match status" value="1"/>
</dbReference>
<dbReference type="InterPro" id="IPR005608">
    <property type="entry name" value="Adeno_V"/>
</dbReference>
<dbReference type="Pfam" id="PF03910">
    <property type="entry name" value="Adeno_PV"/>
    <property type="match status" value="1"/>
</dbReference>
<gene>
    <name evidence="1" type="primary">L2</name>
</gene>
<comment type="function">
    <text evidence="1 3 4 6 7">Associates loosely with the viral DNA to form an outer shell around the nucleoprotein-DNA complex and links it with the capsid by binding the endosome lysis protein. During entry, secures the viral genome in the capsid until it reaches the nuclear pore complex, preventing innate immunity responses (PubMed:34919430). Dissociates from the viral genome at nuclear pore (PubMed:34919430). Might be involved in nuclear capsid assembly of the viral particles through its association with NPM1/nucleophosmin.</text>
</comment>
<comment type="subunit">
    <text evidence="1 3 4">Monomer. Homodimer. Exists in equilibrium between monomers and dimers in solution. Interacts with the histone-like nucleoprotein; this interactions bridge the virus core to the capsid. Interacts with core protein X; this interactions bridge the virus core to the capsid. Interacts with the endosome lysis protein VI; this interactions bridge the virus core to the capsid. Interacts with the peripentonal hexons. Interacts with host NPM1; this interaction might play a role in virus assembly.</text>
</comment>
<comment type="interaction">
    <interactant intactId="EBI-7481199">
        <id>P24938</id>
    </interactant>
    <interactant intactId="EBI-78579">
        <id>P06748</id>
        <label>NPM1</label>
    </interactant>
    <organismsDiffer>true</organismsDiffer>
    <experiments>4</experiments>
</comment>
<comment type="subcellular location">
    <subcellularLocation>
        <location evidence="1 4">Virion</location>
    </subcellularLocation>
    <subcellularLocation>
        <location evidence="1">Host nucleus</location>
        <location evidence="1">Host nucleolus</location>
    </subcellularLocation>
    <text evidence="1 4">Located inside the capsid (core). Present in 157 copies per virion. Localizes in the nucleoli during infection, then translocates from the nucleoli to the nucleoplasm as the infection progresses and is finally incorporated into the viral particles.</text>
</comment>
<comment type="induction">
    <text evidence="1">Expressed in the late phase of the viral replicative cycle.</text>
</comment>
<comment type="PTM">
    <text evidence="5 6">During virion entry, is ubiquitinated at the nuclear pore complex by host MIB1 (PubMed:31851912). This dissociates viral genomic DNA from capsid and allows genome delivery into nucleus for infection (PubMed:34919430).</text>
</comment>
<comment type="miscellaneous">
    <text evidence="1">All late proteins expressed from the major late promoter are produced by alternative splicing and alternative polyadenylation of the same gene giving rise to non-overlapping ORFs. A leader sequence is present in the N-terminus of all these mRNAs and is recognized by the viral shutoff protein to provide expression although conventional translation via ribosome scanning from the cap has been shut off in the host cell.</text>
</comment>
<comment type="miscellaneous">
    <text evidence="1">This protein is only encoded by mastadenoviruses, and may therefore play a role in mammals tropism.</text>
</comment>
<comment type="similarity">
    <text evidence="1 8">Belongs to the adenoviridae core-capsid bridging protein family.</text>
</comment>
<reference key="1">
    <citation type="journal article" date="1992" name="Virology">
        <title>The sequence of the genome of adenovirus type 5 and its comparison with the genome of adenovirus type 2.</title>
        <authorList>
            <person name="Chroboczek J."/>
            <person name="Bieber F."/>
            <person name="Jacrot B."/>
        </authorList>
    </citation>
    <scope>NUCLEOTIDE SEQUENCE [GENOMIC DNA]</scope>
</reference>
<reference key="2">
    <citation type="journal article" date="2012" name="Nat. Methods">
        <title>De novo derivation of proteomes from transcriptomes for transcript and protein identification.</title>
        <authorList>
            <person name="Evans V.C."/>
            <person name="Barker G."/>
            <person name="Heesom K.J."/>
            <person name="Fan J."/>
            <person name="Bessant C."/>
            <person name="Matthews D.A."/>
        </authorList>
    </citation>
    <scope>NUCLEOTIDE SEQUENCE [MRNA]</scope>
</reference>
<reference key="3">
    <citation type="journal article" date="1982" name="J. Gen. Virol.">
        <title>Nucleic acid-binding properties of adenovirus structural polypeptides.</title>
        <authorList>
            <person name="Russell W.C."/>
            <person name="Precious B."/>
        </authorList>
    </citation>
    <scope>FUNCTION</scope>
    <scope>DNA-BINDING</scope>
</reference>
<reference key="4">
    <citation type="journal article" date="2012" name="Viruses">
        <title>Latest insights on adenovirus structure and assembly.</title>
        <authorList>
            <person name="San Martin C."/>
        </authorList>
    </citation>
    <scope>REVIEW</scope>
</reference>
<reference key="5">
    <citation type="journal article" date="2012" name="Nucleic Acids Res.">
        <title>Chromatin structure of adenovirus DNA throughout infection.</title>
        <authorList>
            <person name="Giberson A.N."/>
            <person name="Davidson A.R."/>
            <person name="Parks R.J."/>
        </authorList>
    </citation>
    <scope>REVIEW</scope>
</reference>
<reference key="6">
    <citation type="journal article" date="2014" name="J. Virol.">
        <title>Isolation and characterization of the DNA and protein binding activities of adenovirus core protein V.</title>
        <authorList>
            <person name="Perez-Vargas J."/>
            <person name="Vaughan R.C."/>
            <person name="Houser C."/>
            <person name="Hastie K.M."/>
            <person name="Kao C.C."/>
            <person name="Nemerow G.R."/>
        </authorList>
    </citation>
    <scope>INTERACTION WITH THE ENDOSOME LYSIS PROTEIN VI</scope>
    <scope>DNA-BINDING</scope>
    <scope>SUBUNIT</scope>
</reference>
<reference key="7">
    <citation type="journal article" date="2014" name="Proc. Natl. Acad. Sci. U.S.A.">
        <title>Structures and organization of adenovirus cement proteins provide insights into the role of capsid maturation in virus entry and infection.</title>
        <authorList>
            <person name="Reddy V.S."/>
            <person name="Nemerow G.R."/>
        </authorList>
    </citation>
    <scope>IDENTIFICATION IN A COMPLEX WITH ENDOSOME LYSIS PROTEIN VI AND HEXON-LINKING PROTEIN VIII</scope>
    <scope>INTERACTION WITH THE HEXON PROTEIN</scope>
    <scope>SUBCELLULAR LOCATION</scope>
</reference>
<reference key="8">
    <citation type="journal article" date="2019" name="Cell Rep.">
        <title>The E3 Ubiquitin Ligase Mind Bomb 1 Controls Adenovirus Genome Release at the Nuclear Pore Complex.</title>
        <authorList>
            <person name="Bauer M."/>
            <person name="Flatt J.W."/>
            <person name="Seiler D."/>
            <person name="Cardel B."/>
            <person name="Emmenlauer M."/>
            <person name="Boucke K."/>
            <person name="Suomalainen M."/>
            <person name="Hemmi S."/>
            <person name="Greber U.F."/>
        </authorList>
    </citation>
    <scope>UBIQUITINATION BY HOST MIB1</scope>
</reference>
<reference key="9">
    <citation type="journal article" date="2021" name="Sci. Adv.">
        <title>A viral ubiquitination switch attenuates innate immunity and triggers nuclear import of virion DNA and infection.</title>
        <authorList>
            <person name="Bauer M."/>
            <person name="Gomez-Gonzalez A."/>
            <person name="Suomalainen M."/>
            <person name="Schilling N."/>
            <person name="Hemmi S."/>
            <person name="Greber U.F."/>
        </authorList>
    </citation>
    <scope>FUNCTION</scope>
    <scope>UBIQUITINATION BY HOST MIB1</scope>
</reference>
<sequence>MSKRKIKEEMLQVIAPEIYGPPKKEEQDYKPRKLKRVKKKKKDDDDELDDEVELLHATAPRRRVQWKGRRVKRVLRPGTTVVFTPGERSTRTYKRVYDEVYGDEDLLEQANERLGEFAYGKRHKDMLALPLDEGNPTPSLKPVTLQQVLPALAPSEEKRGLKRESGDLAPTVQLMVPKRQRLEDVLEKMTVEPGLEPEVRVRPIKQVAPGLGVQTVDVQIPTTSSTSIATATEGMETQTSPVASAVADAAVQAVAAAASKTSTEVQTDPWMFRVSAPRRPRGSRKYGAASALLPEYALHPSIAPTPGYRGYTYRPRRRATTRRRTTTGTRRRRRRRQPVLAPISVRRVAREGGRTLVLPTARYHPSIV</sequence>